<proteinExistence type="inferred from homology"/>
<comment type="function">
    <text evidence="1">Catalytic subunit of DNA primase, an RNA polymerase that catalyzes the synthesis of short RNA molecules used as primers for DNA polymerase during DNA replication. The small subunit contains the primase catalytic core and has DNA synthesis activity on its own. Binding to the large subunit stabilizes and modulates the activity, increasing the rate of DNA synthesis while decreasing the length of the DNA fragments, and conferring RNA synthesis capability. The DNA polymerase activity may enable DNA primase to also catalyze primer extension after primer synthesis. May also play a role in DNA repair.</text>
</comment>
<comment type="cofactor">
    <cofactor evidence="1">
        <name>Mg(2+)</name>
        <dbReference type="ChEBI" id="CHEBI:18420"/>
    </cofactor>
    <cofactor evidence="1">
        <name>Mn(2+)</name>
        <dbReference type="ChEBI" id="CHEBI:29035"/>
    </cofactor>
</comment>
<comment type="subunit">
    <text evidence="1">Heterodimer of a small subunit (PriS) and a large subunit (PriL).</text>
</comment>
<comment type="similarity">
    <text evidence="1">Belongs to the eukaryotic-type primase small subunit family.</text>
</comment>
<protein>
    <recommendedName>
        <fullName evidence="1">DNA primase small subunit PriS</fullName>
        <ecNumber evidence="1">2.7.7.-</ecNumber>
    </recommendedName>
</protein>
<evidence type="ECO:0000255" key="1">
    <source>
        <dbReference type="HAMAP-Rule" id="MF_00700"/>
    </source>
</evidence>
<keyword id="KW-0235">DNA replication</keyword>
<keyword id="KW-0240">DNA-directed RNA polymerase</keyword>
<keyword id="KW-0460">Magnesium</keyword>
<keyword id="KW-0464">Manganese</keyword>
<keyword id="KW-0479">Metal-binding</keyword>
<keyword id="KW-0548">Nucleotidyltransferase</keyword>
<keyword id="KW-0639">Primosome</keyword>
<keyword id="KW-1185">Reference proteome</keyword>
<keyword id="KW-0804">Transcription</keyword>
<keyword id="KW-0808">Transferase</keyword>
<organism>
    <name type="scientific">Methanocorpusculum labreanum (strain ATCC 43576 / DSM 4855 / Z)</name>
    <dbReference type="NCBI Taxonomy" id="410358"/>
    <lineage>
        <taxon>Archaea</taxon>
        <taxon>Methanobacteriati</taxon>
        <taxon>Methanobacteriota</taxon>
        <taxon>Stenosarchaea group</taxon>
        <taxon>Methanomicrobia</taxon>
        <taxon>Methanomicrobiales</taxon>
        <taxon>Methanocorpusculaceae</taxon>
        <taxon>Methanocorpusculum</taxon>
    </lineage>
</organism>
<accession>A2ST15</accession>
<name>PRIS_METLZ</name>
<gene>
    <name evidence="1" type="primary">priS</name>
    <name type="synonym">priA</name>
    <name type="ordered locus">Mlab_1303</name>
</gene>
<reference key="1">
    <citation type="journal article" date="2009" name="Stand. Genomic Sci.">
        <title>Complete genome sequence of Methanocorpusculum labreanum type strain Z.</title>
        <authorList>
            <person name="Anderson I.J."/>
            <person name="Sieprawska-Lupa M."/>
            <person name="Goltsman E."/>
            <person name="Lapidus A."/>
            <person name="Copeland A."/>
            <person name="Glavina Del Rio T."/>
            <person name="Tice H."/>
            <person name="Dalin E."/>
            <person name="Barry K."/>
            <person name="Pitluck S."/>
            <person name="Hauser L."/>
            <person name="Land M."/>
            <person name="Lucas S."/>
            <person name="Richardson P."/>
            <person name="Whitman W.B."/>
            <person name="Kyrpides N.C."/>
        </authorList>
    </citation>
    <scope>NUCLEOTIDE SEQUENCE [LARGE SCALE GENOMIC DNA]</scope>
    <source>
        <strain>ATCC 43576 / DSM 4855 / Z</strain>
    </source>
</reference>
<feature type="chain" id="PRO_1000045503" description="DNA primase small subunit PriS">
    <location>
        <begin position="1"/>
        <end position="380"/>
    </location>
</feature>
<feature type="active site" evidence="1">
    <location>
        <position position="103"/>
    </location>
</feature>
<feature type="active site" evidence="1">
    <location>
        <position position="105"/>
    </location>
</feature>
<feature type="active site" evidence="1">
    <location>
        <position position="284"/>
    </location>
</feature>
<sequence length="380" mass="41900">MKPATLEFLRQRFFAYYNGAIPGAGAGYSPESLTEREWGFLFFTENQRSGMRRHISFTSQDELTSYLKSMVPAHVYYSTAYYTHPGAAQMADKEWRGADVIFDLDADHIVRGPYDIMLARVKEELFKLIDMLTGELGFAKRDLRINFSGGRGYHVHLPLLSVRGWDTAERRELVNYVSGTGLSFDSMMAPSQKSGWKLRYHDALNDELARIAGLPCEDALSYLSGLSGISETFAAGFLKNISQTQNLLKSNPEKLLANKVVRAIANAENEPFQAGILSRAAQADEPVTTDVKRLIRHPGSLHGGSGMRVVPISVDQLDAFDPLIDAVVFGERNVSVDCAFNLSMPILGNNYTLTAGRNVVPEALGVFLCCRGIAELSGGI</sequence>
<dbReference type="EC" id="2.7.7.-" evidence="1"/>
<dbReference type="EMBL" id="CP000559">
    <property type="protein sequence ID" value="ABN07471.1"/>
    <property type="molecule type" value="Genomic_DNA"/>
</dbReference>
<dbReference type="RefSeq" id="WP_011833674.1">
    <property type="nucleotide sequence ID" value="NC_008942.1"/>
</dbReference>
<dbReference type="SMR" id="A2ST15"/>
<dbReference type="STRING" id="410358.Mlab_1303"/>
<dbReference type="GeneID" id="4794547"/>
<dbReference type="KEGG" id="mla:Mlab_1303"/>
<dbReference type="eggNOG" id="arCOG04110">
    <property type="taxonomic scope" value="Archaea"/>
</dbReference>
<dbReference type="HOGENOM" id="CLU_056123_1_0_2"/>
<dbReference type="OrthoDB" id="31125at2157"/>
<dbReference type="Proteomes" id="UP000000365">
    <property type="component" value="Chromosome"/>
</dbReference>
<dbReference type="GO" id="GO:0000428">
    <property type="term" value="C:DNA-directed RNA polymerase complex"/>
    <property type="evidence" value="ECO:0007669"/>
    <property type="project" value="UniProtKB-KW"/>
</dbReference>
<dbReference type="GO" id="GO:1990077">
    <property type="term" value="C:primosome complex"/>
    <property type="evidence" value="ECO:0007669"/>
    <property type="project" value="UniProtKB-KW"/>
</dbReference>
<dbReference type="GO" id="GO:0003899">
    <property type="term" value="F:DNA-directed RNA polymerase activity"/>
    <property type="evidence" value="ECO:0007669"/>
    <property type="project" value="InterPro"/>
</dbReference>
<dbReference type="GO" id="GO:0046872">
    <property type="term" value="F:metal ion binding"/>
    <property type="evidence" value="ECO:0007669"/>
    <property type="project" value="UniProtKB-KW"/>
</dbReference>
<dbReference type="GO" id="GO:0006269">
    <property type="term" value="P:DNA replication, synthesis of primer"/>
    <property type="evidence" value="ECO:0007669"/>
    <property type="project" value="UniProtKB-UniRule"/>
</dbReference>
<dbReference type="CDD" id="cd04860">
    <property type="entry name" value="AE_Prim_S"/>
    <property type="match status" value="1"/>
</dbReference>
<dbReference type="Gene3D" id="3.90.920.10">
    <property type="entry name" value="DNA primase, PRIM domain"/>
    <property type="match status" value="1"/>
</dbReference>
<dbReference type="HAMAP" id="MF_00700">
    <property type="entry name" value="DNA_primase_sml_arc"/>
    <property type="match status" value="1"/>
</dbReference>
<dbReference type="InterPro" id="IPR002755">
    <property type="entry name" value="DNA_primase_S"/>
</dbReference>
<dbReference type="InterPro" id="IPR014052">
    <property type="entry name" value="DNA_primase_ssu_euk/arc"/>
</dbReference>
<dbReference type="InterPro" id="IPR023639">
    <property type="entry name" value="DNA_primase_ssu_PriS"/>
</dbReference>
<dbReference type="PANTHER" id="PTHR10536">
    <property type="entry name" value="DNA PRIMASE SMALL SUBUNIT"/>
    <property type="match status" value="1"/>
</dbReference>
<dbReference type="Pfam" id="PF01896">
    <property type="entry name" value="DNA_primase_S"/>
    <property type="match status" value="1"/>
</dbReference>
<dbReference type="SUPFAM" id="SSF56747">
    <property type="entry name" value="Prim-pol domain"/>
    <property type="match status" value="1"/>
</dbReference>